<proteinExistence type="inferred from homology"/>
<protein>
    <recommendedName>
        <fullName evidence="1">Pantothenate kinase</fullName>
        <ecNumber evidence="1">2.7.1.33</ecNumber>
    </recommendedName>
    <alternativeName>
        <fullName evidence="1">Pantothenic acid kinase</fullName>
    </alternativeName>
</protein>
<feature type="chain" id="PRO_1000099956" description="Pantothenate kinase">
    <location>
        <begin position="1"/>
        <end position="306"/>
    </location>
</feature>
<feature type="binding site" evidence="1">
    <location>
        <begin position="91"/>
        <end position="98"/>
    </location>
    <ligand>
        <name>ATP</name>
        <dbReference type="ChEBI" id="CHEBI:30616"/>
    </ligand>
</feature>
<keyword id="KW-0067">ATP-binding</keyword>
<keyword id="KW-0173">Coenzyme A biosynthesis</keyword>
<keyword id="KW-0963">Cytoplasm</keyword>
<keyword id="KW-0418">Kinase</keyword>
<keyword id="KW-0547">Nucleotide-binding</keyword>
<keyword id="KW-0808">Transferase</keyword>
<comment type="catalytic activity">
    <reaction evidence="1">
        <text>(R)-pantothenate + ATP = (R)-4'-phosphopantothenate + ADP + H(+)</text>
        <dbReference type="Rhea" id="RHEA:16373"/>
        <dbReference type="ChEBI" id="CHEBI:10986"/>
        <dbReference type="ChEBI" id="CHEBI:15378"/>
        <dbReference type="ChEBI" id="CHEBI:29032"/>
        <dbReference type="ChEBI" id="CHEBI:30616"/>
        <dbReference type="ChEBI" id="CHEBI:456216"/>
        <dbReference type="EC" id="2.7.1.33"/>
    </reaction>
</comment>
<comment type="pathway">
    <text evidence="1">Cofactor biosynthesis; coenzyme A biosynthesis; CoA from (R)-pantothenate: step 1/5.</text>
</comment>
<comment type="subcellular location">
    <subcellularLocation>
        <location evidence="1">Cytoplasm</location>
    </subcellularLocation>
</comment>
<comment type="similarity">
    <text evidence="1">Belongs to the prokaryotic pantothenate kinase family.</text>
</comment>
<organism>
    <name type="scientific">Streptococcus pyogenes serotype M12 (strain MGAS9429)</name>
    <dbReference type="NCBI Taxonomy" id="370551"/>
    <lineage>
        <taxon>Bacteria</taxon>
        <taxon>Bacillati</taxon>
        <taxon>Bacillota</taxon>
        <taxon>Bacilli</taxon>
        <taxon>Lactobacillales</taxon>
        <taxon>Streptococcaceae</taxon>
        <taxon>Streptococcus</taxon>
    </lineage>
</organism>
<accession>Q1JLI4</accession>
<evidence type="ECO:0000255" key="1">
    <source>
        <dbReference type="HAMAP-Rule" id="MF_00215"/>
    </source>
</evidence>
<name>COAA_STRPC</name>
<reference key="1">
    <citation type="journal article" date="2006" name="Proc. Natl. Acad. Sci. U.S.A.">
        <title>Molecular genetic anatomy of inter- and intraserotype variation in the human bacterial pathogen group A Streptococcus.</title>
        <authorList>
            <person name="Beres S.B."/>
            <person name="Richter E.W."/>
            <person name="Nagiec M.J."/>
            <person name="Sumby P."/>
            <person name="Porcella S.F."/>
            <person name="DeLeo F.R."/>
            <person name="Musser J.M."/>
        </authorList>
    </citation>
    <scope>NUCLEOTIDE SEQUENCE [LARGE SCALE GENOMIC DNA]</scope>
    <source>
        <strain>MGAS9429</strain>
    </source>
</reference>
<dbReference type="EC" id="2.7.1.33" evidence="1"/>
<dbReference type="EMBL" id="CP000259">
    <property type="protein sequence ID" value="ABF32235.1"/>
    <property type="molecule type" value="Genomic_DNA"/>
</dbReference>
<dbReference type="RefSeq" id="WP_002989697.1">
    <property type="nucleotide sequence ID" value="NC_008021.1"/>
</dbReference>
<dbReference type="SMR" id="Q1JLI4"/>
<dbReference type="KEGG" id="spk:MGAS9429_Spy1048"/>
<dbReference type="HOGENOM" id="CLU_053818_1_1_9"/>
<dbReference type="UniPathway" id="UPA00241">
    <property type="reaction ID" value="UER00352"/>
</dbReference>
<dbReference type="Proteomes" id="UP000002433">
    <property type="component" value="Chromosome"/>
</dbReference>
<dbReference type="GO" id="GO:0005737">
    <property type="term" value="C:cytoplasm"/>
    <property type="evidence" value="ECO:0007669"/>
    <property type="project" value="UniProtKB-SubCell"/>
</dbReference>
<dbReference type="GO" id="GO:0005524">
    <property type="term" value="F:ATP binding"/>
    <property type="evidence" value="ECO:0007669"/>
    <property type="project" value="UniProtKB-UniRule"/>
</dbReference>
<dbReference type="GO" id="GO:0004594">
    <property type="term" value="F:pantothenate kinase activity"/>
    <property type="evidence" value="ECO:0007669"/>
    <property type="project" value="UniProtKB-UniRule"/>
</dbReference>
<dbReference type="GO" id="GO:0015937">
    <property type="term" value="P:coenzyme A biosynthetic process"/>
    <property type="evidence" value="ECO:0007669"/>
    <property type="project" value="UniProtKB-UniRule"/>
</dbReference>
<dbReference type="CDD" id="cd02025">
    <property type="entry name" value="PanK"/>
    <property type="match status" value="1"/>
</dbReference>
<dbReference type="Gene3D" id="3.40.50.300">
    <property type="entry name" value="P-loop containing nucleotide triphosphate hydrolases"/>
    <property type="match status" value="1"/>
</dbReference>
<dbReference type="HAMAP" id="MF_00215">
    <property type="entry name" value="Pantothen_kinase_1"/>
    <property type="match status" value="1"/>
</dbReference>
<dbReference type="InterPro" id="IPR027417">
    <property type="entry name" value="P-loop_NTPase"/>
</dbReference>
<dbReference type="InterPro" id="IPR004566">
    <property type="entry name" value="PanK"/>
</dbReference>
<dbReference type="InterPro" id="IPR006083">
    <property type="entry name" value="PRK/URK"/>
</dbReference>
<dbReference type="NCBIfam" id="TIGR00554">
    <property type="entry name" value="panK_bact"/>
    <property type="match status" value="1"/>
</dbReference>
<dbReference type="PANTHER" id="PTHR10285">
    <property type="entry name" value="URIDINE KINASE"/>
    <property type="match status" value="1"/>
</dbReference>
<dbReference type="Pfam" id="PF00485">
    <property type="entry name" value="PRK"/>
    <property type="match status" value="1"/>
</dbReference>
<dbReference type="PIRSF" id="PIRSF000545">
    <property type="entry name" value="Pantothenate_kin"/>
    <property type="match status" value="1"/>
</dbReference>
<dbReference type="SUPFAM" id="SSF52540">
    <property type="entry name" value="P-loop containing nucleoside triphosphate hydrolases"/>
    <property type="match status" value="1"/>
</dbReference>
<sequence>MSNEFINFEKISRESWKTLHQKAKALLTQEELKSITSLNDNISINDVIDIYLPLINLIQVYKIAQENLSFSKSLFLKKDIQLRPFIIGISGSVAVGKSTTSRLLQLLLSRTHPNSQVELVTTDGFLYPNQFLIEQGLLNRKGFPESYNMELLLDFLDSIKNGQTAFAPVYSHDIYDIIPNQKQSFNNPDFLIVEGINVFQNQQNNRLYMSDYFDFSIYIDADSSHIETWYIERFLSILKLAKCDPHNYYAQYAQLPRSEAIAFARNVWKTVNLENLEKFIEPTRNRAELILHKSADHKIDEIYLKK</sequence>
<gene>
    <name evidence="1" type="primary">coaA</name>
    <name type="ordered locus">MGAS9429_Spy1048</name>
</gene>